<sequence length="269" mass="29128">MLETTNGEASPEDPPLNLKSLSQPPQKRSRTVEDFNRFCSFVLTYAGYIPTPATEERPWTPPSSVSPHRTEESDGWDSSPQLPVPSDPPQPPATSDISTIETFVMKAKSQGGGGNSIMKTGGPIGGSGEQVKKGSRRKRRQLHRGGVTMSDTDTDEEERDKRPAGSLPAPQLPPSAESSRDGGGSSSDTDTQVMDEDIMVESGDDSWDLVTCYCEKPFAGRPMIECNICCTWVHLSCAKIRKSNVPDVYYCQKCRGGRGSGGTALKEEP</sequence>
<accession>Q0IHB0</accession>
<evidence type="ECO:0000250" key="1">
    <source>
        <dbReference type="UniProtKB" id="Q9BUL5"/>
    </source>
</evidence>
<evidence type="ECO:0000256" key="2">
    <source>
        <dbReference type="SAM" id="MobiDB-lite"/>
    </source>
</evidence>
<evidence type="ECO:0000305" key="3"/>
<keyword id="KW-0072">Autophagy</keyword>
<keyword id="KW-0963">Cytoplasm</keyword>
<keyword id="KW-0479">Metal-binding</keyword>
<keyword id="KW-0539">Nucleus</keyword>
<keyword id="KW-1185">Reference proteome</keyword>
<keyword id="KW-0862">Zinc</keyword>
<keyword id="KW-0863">Zinc-finger</keyword>
<protein>
    <recommendedName>
        <fullName evidence="3">PHD finger protein 23B</fullName>
    </recommendedName>
</protein>
<organism>
    <name type="scientific">Xenopus laevis</name>
    <name type="common">African clawed frog</name>
    <dbReference type="NCBI Taxonomy" id="8355"/>
    <lineage>
        <taxon>Eukaryota</taxon>
        <taxon>Metazoa</taxon>
        <taxon>Chordata</taxon>
        <taxon>Craniata</taxon>
        <taxon>Vertebrata</taxon>
        <taxon>Euteleostomi</taxon>
        <taxon>Amphibia</taxon>
        <taxon>Batrachia</taxon>
        <taxon>Anura</taxon>
        <taxon>Pipoidea</taxon>
        <taxon>Pipidae</taxon>
        <taxon>Xenopodinae</taxon>
        <taxon>Xenopus</taxon>
        <taxon>Xenopus</taxon>
    </lineage>
</organism>
<comment type="function">
    <text evidence="1">Acts as a negative regulator of autophagy.</text>
</comment>
<comment type="subcellular location">
    <subcellularLocation>
        <location evidence="1">Nucleus</location>
    </subcellularLocation>
    <subcellularLocation>
        <location evidence="1">Cytoplasm</location>
    </subcellularLocation>
</comment>
<comment type="domain">
    <text evidence="1">The PHD-type zinc-finger domain is required for negative regulation of autophagy.</text>
</comment>
<comment type="similarity">
    <text evidence="3">Belongs to the PHF23 family.</text>
</comment>
<feature type="chain" id="PRO_0000302836" description="PHD finger protein 23B">
    <location>
        <begin position="1"/>
        <end position="269"/>
    </location>
</feature>
<feature type="zinc finger region" description="PHD-type">
    <location>
        <begin position="209"/>
        <end position="257"/>
    </location>
</feature>
<feature type="region of interest" description="Disordered" evidence="2">
    <location>
        <begin position="1"/>
        <end position="31"/>
    </location>
</feature>
<feature type="region of interest" description="Disordered" evidence="2">
    <location>
        <begin position="52"/>
        <end position="193"/>
    </location>
</feature>
<feature type="compositionally biased region" description="Pro residues" evidence="2">
    <location>
        <begin position="82"/>
        <end position="92"/>
    </location>
</feature>
<feature type="compositionally biased region" description="Basic residues" evidence="2">
    <location>
        <begin position="133"/>
        <end position="143"/>
    </location>
</feature>
<dbReference type="EMBL" id="BC123233">
    <property type="protein sequence ID" value="AAI23234.1"/>
    <property type="molecule type" value="mRNA"/>
</dbReference>
<dbReference type="RefSeq" id="NP_001090358.1">
    <property type="nucleotide sequence ID" value="NM_001096889.1"/>
</dbReference>
<dbReference type="SMR" id="Q0IHB0"/>
<dbReference type="DNASU" id="779269"/>
<dbReference type="GeneID" id="779269"/>
<dbReference type="KEGG" id="xla:779269"/>
<dbReference type="CTD" id="779269"/>
<dbReference type="OrthoDB" id="79252at2759"/>
<dbReference type="Proteomes" id="UP000186698">
    <property type="component" value="Chromosome 3S"/>
</dbReference>
<dbReference type="Bgee" id="779269">
    <property type="expression patterns" value="Expressed in oocyte and 19 other cell types or tissues"/>
</dbReference>
<dbReference type="GO" id="GO:0005737">
    <property type="term" value="C:cytoplasm"/>
    <property type="evidence" value="ECO:0007669"/>
    <property type="project" value="UniProtKB-SubCell"/>
</dbReference>
<dbReference type="GO" id="GO:0005634">
    <property type="term" value="C:nucleus"/>
    <property type="evidence" value="ECO:0000318"/>
    <property type="project" value="GO_Central"/>
</dbReference>
<dbReference type="GO" id="GO:0008270">
    <property type="term" value="F:zinc ion binding"/>
    <property type="evidence" value="ECO:0007669"/>
    <property type="project" value="UniProtKB-KW"/>
</dbReference>
<dbReference type="GO" id="GO:0006914">
    <property type="term" value="P:autophagy"/>
    <property type="evidence" value="ECO:0007669"/>
    <property type="project" value="UniProtKB-KW"/>
</dbReference>
<dbReference type="GO" id="GO:1902902">
    <property type="term" value="P:negative regulation of autophagosome assembly"/>
    <property type="evidence" value="ECO:0000318"/>
    <property type="project" value="GO_Central"/>
</dbReference>
<dbReference type="GO" id="GO:1901097">
    <property type="term" value="P:negative regulation of autophagosome maturation"/>
    <property type="evidence" value="ECO:0000318"/>
    <property type="project" value="GO_Central"/>
</dbReference>
<dbReference type="GO" id="GO:0031398">
    <property type="term" value="P:positive regulation of protein ubiquitination"/>
    <property type="evidence" value="ECO:0000318"/>
    <property type="project" value="GO_Central"/>
</dbReference>
<dbReference type="CDD" id="cd15631">
    <property type="entry name" value="PHD_PHF23"/>
    <property type="match status" value="1"/>
</dbReference>
<dbReference type="Gene3D" id="3.30.40.10">
    <property type="entry name" value="Zinc/RING finger domain, C3HC4 (zinc finger)"/>
    <property type="match status" value="1"/>
</dbReference>
<dbReference type="InterPro" id="IPR019786">
    <property type="entry name" value="Zinc_finger_PHD-type_CS"/>
</dbReference>
<dbReference type="InterPro" id="IPR011011">
    <property type="entry name" value="Znf_FYVE_PHD"/>
</dbReference>
<dbReference type="InterPro" id="IPR001965">
    <property type="entry name" value="Znf_PHD"/>
</dbReference>
<dbReference type="InterPro" id="IPR019787">
    <property type="entry name" value="Znf_PHD-finger"/>
</dbReference>
<dbReference type="InterPro" id="IPR013083">
    <property type="entry name" value="Znf_RING/FYVE/PHD"/>
</dbReference>
<dbReference type="PANTHER" id="PTHR14571">
    <property type="entry name" value="HISTONE-LYSINE N-METHYLTRANSFERASE SET-26-RELATED"/>
    <property type="match status" value="1"/>
</dbReference>
<dbReference type="PANTHER" id="PTHR14571:SF8">
    <property type="entry name" value="PHD FINGER PROTEIN 23"/>
    <property type="match status" value="1"/>
</dbReference>
<dbReference type="Pfam" id="PF00628">
    <property type="entry name" value="PHD"/>
    <property type="match status" value="1"/>
</dbReference>
<dbReference type="SMART" id="SM00249">
    <property type="entry name" value="PHD"/>
    <property type="match status" value="1"/>
</dbReference>
<dbReference type="SUPFAM" id="SSF57903">
    <property type="entry name" value="FYVE/PHD zinc finger"/>
    <property type="match status" value="1"/>
</dbReference>
<dbReference type="PROSITE" id="PS01359">
    <property type="entry name" value="ZF_PHD_1"/>
    <property type="match status" value="1"/>
</dbReference>
<reference key="1">
    <citation type="submission" date="2006-09" db="EMBL/GenBank/DDBJ databases">
        <authorList>
            <consortium name="NIH - Xenopus Gene Collection (XGC) project"/>
        </authorList>
    </citation>
    <scope>NUCLEOTIDE SEQUENCE [LARGE SCALE MRNA]</scope>
    <source>
        <tissue>Embryo</tissue>
    </source>
</reference>
<proteinExistence type="evidence at transcript level"/>
<gene>
    <name evidence="3" type="primary">phf23-b</name>
</gene>
<name>PF23B_XENLA</name>